<evidence type="ECO:0000250" key="1"/>
<evidence type="ECO:0000255" key="2"/>
<evidence type="ECO:0000305" key="3"/>
<organism>
    <name type="scientific">Lycosa singoriensis</name>
    <name type="common">Wolf spider</name>
    <name type="synonym">Aranea singoriensis</name>
    <dbReference type="NCBI Taxonomy" id="434756"/>
    <lineage>
        <taxon>Eukaryota</taxon>
        <taxon>Metazoa</taxon>
        <taxon>Ecdysozoa</taxon>
        <taxon>Arthropoda</taxon>
        <taxon>Chelicerata</taxon>
        <taxon>Arachnida</taxon>
        <taxon>Araneae</taxon>
        <taxon>Araneomorphae</taxon>
        <taxon>Entelegynae</taxon>
        <taxon>Lycosoidea</taxon>
        <taxon>Lycosidae</taxon>
        <taxon>Lycosa</taxon>
    </lineage>
</organism>
<keyword id="KW-1015">Disulfide bond</keyword>
<keyword id="KW-0960">Knottin</keyword>
<keyword id="KW-0964">Secreted</keyword>
<keyword id="KW-0732">Signal</keyword>
<keyword id="KW-0800">Toxin</keyword>
<sequence>MMKVLVVVALLVTLISYSSSEGIGDLEADELLSLMANEQTRAKACTPRYYDCSHDRHSCCRSSMFKDVCTCFYPEGGDNKEVCTCQQPKHLKYMEKATDKIKNLFG</sequence>
<accession>B6DCU3</accession>
<proteinExistence type="evidence at transcript level"/>
<dbReference type="EMBL" id="EU926027">
    <property type="protein sequence ID" value="ACI41359.1"/>
    <property type="molecule type" value="mRNA"/>
</dbReference>
<dbReference type="EMBL" id="FM864031">
    <property type="protein sequence ID" value="CAS03628.1"/>
    <property type="molecule type" value="mRNA"/>
</dbReference>
<dbReference type="SMR" id="B6DCU3"/>
<dbReference type="ArachnoServer" id="AS001741">
    <property type="toxin name" value="U3-lycotoxin-Ls1z"/>
</dbReference>
<dbReference type="GO" id="GO:0005576">
    <property type="term" value="C:extracellular region"/>
    <property type="evidence" value="ECO:0007669"/>
    <property type="project" value="UniProtKB-SubCell"/>
</dbReference>
<dbReference type="GO" id="GO:0090729">
    <property type="term" value="F:toxin activity"/>
    <property type="evidence" value="ECO:0007669"/>
    <property type="project" value="UniProtKB-KW"/>
</dbReference>
<dbReference type="InterPro" id="IPR019553">
    <property type="entry name" value="Spider_toxin_CSTX_knottin"/>
</dbReference>
<dbReference type="InterPro" id="IPR011142">
    <property type="entry name" value="Spider_toxin_CSTX_Knottin_CS"/>
</dbReference>
<dbReference type="Pfam" id="PF10530">
    <property type="entry name" value="Toxin_35"/>
    <property type="match status" value="1"/>
</dbReference>
<dbReference type="PROSITE" id="PS60029">
    <property type="entry name" value="SPIDER_CSTX"/>
    <property type="match status" value="1"/>
</dbReference>
<feature type="signal peptide" evidence="2">
    <location>
        <begin position="1"/>
        <end position="20"/>
    </location>
</feature>
<feature type="propeptide" id="PRO_0000401699" evidence="1">
    <location>
        <begin position="21"/>
        <end position="41"/>
    </location>
</feature>
<feature type="chain" id="PRO_0000401700" description="Toxin-like structure LSTX-D4">
    <location>
        <begin position="42"/>
        <end position="106"/>
    </location>
</feature>
<feature type="disulfide bond" evidence="1">
    <location>
        <begin position="45"/>
        <end position="60"/>
    </location>
</feature>
<feature type="disulfide bond" evidence="1">
    <location>
        <begin position="52"/>
        <end position="69"/>
    </location>
</feature>
<feature type="disulfide bond" evidence="1">
    <location>
        <begin position="59"/>
        <end position="85"/>
    </location>
</feature>
<feature type="disulfide bond" evidence="1">
    <location>
        <begin position="71"/>
        <end position="83"/>
    </location>
</feature>
<protein>
    <recommendedName>
        <fullName>Toxin-like structure LSTX-D4</fullName>
    </recommendedName>
</protein>
<reference key="1">
    <citation type="journal article" date="2010" name="Zoology">
        <title>Transcriptome analysis of the venom glands of the Chinese wolf spider Lycosa singoriensis.</title>
        <authorList>
            <person name="Zhang Y."/>
            <person name="Chen J."/>
            <person name="Tang X."/>
            <person name="Wang F."/>
            <person name="Jiang L."/>
            <person name="Xiong X."/>
            <person name="Wang M."/>
            <person name="Rong M."/>
            <person name="Liu Z."/>
            <person name="Liang S."/>
        </authorList>
    </citation>
    <scope>NUCLEOTIDE SEQUENCE [LARGE SCALE MRNA]</scope>
    <source>
        <tissue>Venom gland</tissue>
    </source>
</reference>
<name>TXZ04_LYCSI</name>
<comment type="subcellular location">
    <subcellularLocation>
        <location evidence="1">Secreted</location>
    </subcellularLocation>
</comment>
<comment type="tissue specificity">
    <text>Expressed by the venom gland.</text>
</comment>
<comment type="domain">
    <text evidence="1">The presence of a 'disulfide through disulfide knot' structurally defines this protein as a knottin.</text>
</comment>
<comment type="similarity">
    <text evidence="3">Belongs to the neurotoxin 19 (CSTX) family. 02 (D7) subfamily.</text>
</comment>